<gene>
    <name evidence="1" type="primary">rplX</name>
    <name type="ordered locus">AAur_2937</name>
</gene>
<protein>
    <recommendedName>
        <fullName evidence="1">Large ribosomal subunit protein uL24</fullName>
    </recommendedName>
    <alternativeName>
        <fullName evidence="2">50S ribosomal protein L24</fullName>
    </alternativeName>
</protein>
<evidence type="ECO:0000255" key="1">
    <source>
        <dbReference type="HAMAP-Rule" id="MF_01326"/>
    </source>
</evidence>
<evidence type="ECO:0000305" key="2"/>
<feature type="chain" id="PRO_1000052179" description="Large ribosomal subunit protein uL24">
    <location>
        <begin position="1"/>
        <end position="119"/>
    </location>
</feature>
<comment type="function">
    <text evidence="1">One of two assembly initiator proteins, it binds directly to the 5'-end of the 23S rRNA, where it nucleates assembly of the 50S subunit.</text>
</comment>
<comment type="function">
    <text evidence="1">One of the proteins that surrounds the polypeptide exit tunnel on the outside of the subunit.</text>
</comment>
<comment type="subunit">
    <text evidence="1">Part of the 50S ribosomal subunit.</text>
</comment>
<comment type="similarity">
    <text evidence="1">Belongs to the universal ribosomal protein uL24 family.</text>
</comment>
<sequence>MAKIKKGDLVQVITGAKQERGGDRGKQGKVLRVFPDTNRVLVEGINRVTKHSKVGQSQRGTKTGGIEVVEAPIHVSNVALVDPSTKKPTRVGFRLDTVEKDGATKTVRIRVSKATGKDI</sequence>
<proteinExistence type="inferred from homology"/>
<name>RL24_PAEAT</name>
<accession>A1R8T4</accession>
<keyword id="KW-0687">Ribonucleoprotein</keyword>
<keyword id="KW-0689">Ribosomal protein</keyword>
<keyword id="KW-0694">RNA-binding</keyword>
<keyword id="KW-0699">rRNA-binding</keyword>
<reference key="1">
    <citation type="journal article" date="2006" name="PLoS Genet.">
        <title>Secrets of soil survival revealed by the genome sequence of Arthrobacter aurescens TC1.</title>
        <authorList>
            <person name="Mongodin E.F."/>
            <person name="Shapir N."/>
            <person name="Daugherty S.C."/>
            <person name="DeBoy R.T."/>
            <person name="Emerson J.B."/>
            <person name="Shvartzbeyn A."/>
            <person name="Radune D."/>
            <person name="Vamathevan J."/>
            <person name="Riggs F."/>
            <person name="Grinberg V."/>
            <person name="Khouri H.M."/>
            <person name="Wackett L.P."/>
            <person name="Nelson K.E."/>
            <person name="Sadowsky M.J."/>
        </authorList>
    </citation>
    <scope>NUCLEOTIDE SEQUENCE [LARGE SCALE GENOMIC DNA]</scope>
    <source>
        <strain>TC1</strain>
    </source>
</reference>
<dbReference type="EMBL" id="CP000474">
    <property type="protein sequence ID" value="ABM10180.1"/>
    <property type="molecule type" value="Genomic_DNA"/>
</dbReference>
<dbReference type="RefSeq" id="WP_011775586.1">
    <property type="nucleotide sequence ID" value="NC_008711.1"/>
</dbReference>
<dbReference type="SMR" id="A1R8T4"/>
<dbReference type="STRING" id="290340.AAur_2937"/>
<dbReference type="KEGG" id="aau:AAur_2937"/>
<dbReference type="eggNOG" id="COG0198">
    <property type="taxonomic scope" value="Bacteria"/>
</dbReference>
<dbReference type="HOGENOM" id="CLU_093315_2_0_11"/>
<dbReference type="OrthoDB" id="9807419at2"/>
<dbReference type="Proteomes" id="UP000000637">
    <property type="component" value="Chromosome"/>
</dbReference>
<dbReference type="GO" id="GO:1990904">
    <property type="term" value="C:ribonucleoprotein complex"/>
    <property type="evidence" value="ECO:0007669"/>
    <property type="project" value="UniProtKB-KW"/>
</dbReference>
<dbReference type="GO" id="GO:0005840">
    <property type="term" value="C:ribosome"/>
    <property type="evidence" value="ECO:0007669"/>
    <property type="project" value="UniProtKB-KW"/>
</dbReference>
<dbReference type="GO" id="GO:0019843">
    <property type="term" value="F:rRNA binding"/>
    <property type="evidence" value="ECO:0007669"/>
    <property type="project" value="UniProtKB-UniRule"/>
</dbReference>
<dbReference type="GO" id="GO:0003735">
    <property type="term" value="F:structural constituent of ribosome"/>
    <property type="evidence" value="ECO:0007669"/>
    <property type="project" value="InterPro"/>
</dbReference>
<dbReference type="GO" id="GO:0006412">
    <property type="term" value="P:translation"/>
    <property type="evidence" value="ECO:0007669"/>
    <property type="project" value="UniProtKB-UniRule"/>
</dbReference>
<dbReference type="CDD" id="cd06089">
    <property type="entry name" value="KOW_RPL26"/>
    <property type="match status" value="1"/>
</dbReference>
<dbReference type="Gene3D" id="2.30.30.30">
    <property type="match status" value="1"/>
</dbReference>
<dbReference type="HAMAP" id="MF_01326_B">
    <property type="entry name" value="Ribosomal_uL24_B"/>
    <property type="match status" value="1"/>
</dbReference>
<dbReference type="InterPro" id="IPR005824">
    <property type="entry name" value="KOW"/>
</dbReference>
<dbReference type="InterPro" id="IPR014722">
    <property type="entry name" value="Rib_uL2_dom2"/>
</dbReference>
<dbReference type="InterPro" id="IPR003256">
    <property type="entry name" value="Ribosomal_uL24"/>
</dbReference>
<dbReference type="InterPro" id="IPR041988">
    <property type="entry name" value="Ribosomal_uL24_KOW"/>
</dbReference>
<dbReference type="InterPro" id="IPR008991">
    <property type="entry name" value="Translation_prot_SH3-like_sf"/>
</dbReference>
<dbReference type="NCBIfam" id="TIGR01079">
    <property type="entry name" value="rplX_bact"/>
    <property type="match status" value="1"/>
</dbReference>
<dbReference type="PANTHER" id="PTHR12903">
    <property type="entry name" value="MITOCHONDRIAL RIBOSOMAL PROTEIN L24"/>
    <property type="match status" value="1"/>
</dbReference>
<dbReference type="Pfam" id="PF00467">
    <property type="entry name" value="KOW"/>
    <property type="match status" value="1"/>
</dbReference>
<dbReference type="Pfam" id="PF17136">
    <property type="entry name" value="ribosomal_L24"/>
    <property type="match status" value="1"/>
</dbReference>
<dbReference type="SUPFAM" id="SSF50104">
    <property type="entry name" value="Translation proteins SH3-like domain"/>
    <property type="match status" value="1"/>
</dbReference>
<organism>
    <name type="scientific">Paenarthrobacter aurescens (strain TC1)</name>
    <dbReference type="NCBI Taxonomy" id="290340"/>
    <lineage>
        <taxon>Bacteria</taxon>
        <taxon>Bacillati</taxon>
        <taxon>Actinomycetota</taxon>
        <taxon>Actinomycetes</taxon>
        <taxon>Micrococcales</taxon>
        <taxon>Micrococcaceae</taxon>
        <taxon>Paenarthrobacter</taxon>
    </lineage>
</organism>